<organism evidence="7">
    <name type="scientific">Caenorhabditis elegans</name>
    <dbReference type="NCBI Taxonomy" id="6239"/>
    <lineage>
        <taxon>Eukaryota</taxon>
        <taxon>Metazoa</taxon>
        <taxon>Ecdysozoa</taxon>
        <taxon>Nematoda</taxon>
        <taxon>Chromadorea</taxon>
        <taxon>Rhabditida</taxon>
        <taxon>Rhabditina</taxon>
        <taxon>Rhabditomorpha</taxon>
        <taxon>Rhabditoidea</taxon>
        <taxon>Rhabditidae</taxon>
        <taxon>Peloderinae</taxon>
        <taxon>Caenorhabditis</taxon>
    </lineage>
</organism>
<sequence length="504" mass="57123">MDYVNRNLDDKLLCGICGKYFSDDESLREHRRQRHMTCHMCLLCNRRIPENETLREHMKNKHNIWKLFICVCCNWSFGTEIYLKCHEECMKSTGRPGLLKPLAMPMTAPAREASALNTDPQNGSDDVPHSSPSPVPMIAENSIIQASSLKMEPIESADRSSASTSTPRTLVSGTPREKIPCGFCGKDFFHEGSLREHRRRFHMTGHTCLLCNRQIPENETVRDHMKSQHNIKKVYNCLCCNWTFLNQVHLISHKTCLKQTGKPCCRPGHMEPLAIPRTASIRQFFTLKTETQSGDDDSAAGSQLFSARLSCKSCGKFFYSERSLSKHHRQIHMSGHVCVLCNHQMPKTVTVQEHMEKEHNIRLVFNCRCCNWSFATRRCLMSHVECLKKAGDARNVKPVAIPRMAADSILQSLKESEAQEYPDFSAASTTSSGPASTLKTPRMDFKKNLKICTDAVQILVGNGLFSNEQLAQTETWVMIFSNANKLFHSMNSFGEPSVSRDIPM</sequence>
<evidence type="ECO:0000255" key="1">
    <source>
        <dbReference type="PROSITE-ProRule" id="PRU00042"/>
    </source>
</evidence>
<evidence type="ECO:0000256" key="2">
    <source>
        <dbReference type="SAM" id="MobiDB-lite"/>
    </source>
</evidence>
<evidence type="ECO:0000269" key="3">
    <source>
    </source>
</evidence>
<evidence type="ECO:0000303" key="4">
    <source>
    </source>
</evidence>
<evidence type="ECO:0000305" key="5"/>
<evidence type="ECO:0000305" key="6">
    <source>
    </source>
</evidence>
<evidence type="ECO:0000312" key="7">
    <source>
        <dbReference type="Proteomes" id="UP000001940"/>
    </source>
</evidence>
<evidence type="ECO:0000312" key="8">
    <source>
        <dbReference type="WormBase" id="T05G11.1a"/>
    </source>
</evidence>
<evidence type="ECO:0000312" key="9">
    <source>
        <dbReference type="WormBase" id="T05G11.1b"/>
    </source>
</evidence>
<accession>G5EGQ2</accession>
<accession>G5EGG3</accession>
<protein>
    <recommendedName>
        <fullName evidence="4 8">Paired zinc finger protein 1</fullName>
    </recommendedName>
</protein>
<reference evidence="7" key="1">
    <citation type="journal article" date="1998" name="Science">
        <title>Genome sequence of the nematode C. elegans: a platform for investigating biology.</title>
        <authorList>
            <consortium name="The C. elegans sequencing consortium"/>
        </authorList>
    </citation>
    <scope>NUCLEOTIDE SEQUENCE [LARGE SCALE GENOMIC DNA]</scope>
    <source>
        <strain evidence="7">Bristol N2</strain>
    </source>
</reference>
<reference evidence="5" key="2">
    <citation type="journal article" date="2006" name="PLoS Genet.">
        <title>Expression profiling of MAP kinase-mediated meiotic progression in Caenorhabditis elegans.</title>
        <authorList>
            <person name="Leacock S.W."/>
            <person name="Reinke V."/>
        </authorList>
    </citation>
    <scope>FUNCTION</scope>
    <scope>TISSUE SPECIFICITY</scope>
    <scope>DISRUPTION PHENOTYPE</scope>
</reference>
<name>PZF1_CAEEL</name>
<keyword id="KW-0025">Alternative splicing</keyword>
<keyword id="KW-0440">LIM domain</keyword>
<keyword id="KW-0479">Metal-binding</keyword>
<keyword id="KW-1185">Reference proteome</keyword>
<keyword id="KW-0677">Repeat</keyword>
<keyword id="KW-0804">Transcription</keyword>
<keyword id="KW-0805">Transcription regulation</keyword>
<keyword id="KW-0862">Zinc</keyword>
<keyword id="KW-0863">Zinc-finger</keyword>
<proteinExistence type="evidence at transcript level"/>
<feature type="chain" id="PRO_0000455833" description="Paired zinc finger protein 1">
    <location>
        <begin position="1"/>
        <end position="504"/>
    </location>
</feature>
<feature type="zinc finger region" description="C2H2-type 1" evidence="1">
    <location>
        <begin position="12"/>
        <end position="35"/>
    </location>
</feature>
<feature type="zinc finger region" description="C2H2-type 2" evidence="1">
    <location>
        <begin position="39"/>
        <end position="62"/>
    </location>
</feature>
<feature type="zinc finger region" description="C2H2-type 3; degenerate" evidence="1">
    <location>
        <begin position="68"/>
        <end position="91"/>
    </location>
</feature>
<feature type="zinc finger region" description="C2H2-type 4" evidence="1">
    <location>
        <begin position="179"/>
        <end position="202"/>
    </location>
</feature>
<feature type="zinc finger region" description="C2H2-type 5" evidence="1">
    <location>
        <begin position="206"/>
        <end position="229"/>
    </location>
</feature>
<feature type="zinc finger region" description="C2H2-type 6; degenerate" evidence="1">
    <location>
        <begin position="235"/>
        <end position="258"/>
    </location>
</feature>
<feature type="zinc finger region" description="C2H2-type 7" evidence="1">
    <location>
        <begin position="309"/>
        <end position="332"/>
    </location>
</feature>
<feature type="zinc finger region" description="C2H2-type 8; degenerate" evidence="1">
    <location>
        <begin position="365"/>
        <end position="389"/>
    </location>
</feature>
<feature type="region of interest" description="Disordered" evidence="2">
    <location>
        <begin position="115"/>
        <end position="136"/>
    </location>
</feature>
<feature type="region of interest" description="Disordered" evidence="2">
    <location>
        <begin position="154"/>
        <end position="173"/>
    </location>
</feature>
<feature type="compositionally biased region" description="Polar residues" evidence="2">
    <location>
        <begin position="159"/>
        <end position="172"/>
    </location>
</feature>
<feature type="splice variant" id="VSP_061536" description="In isoform b." evidence="5">
    <location>
        <begin position="1"/>
        <end position="35"/>
    </location>
</feature>
<dbReference type="EMBL" id="BX284605">
    <property type="protein sequence ID" value="CAA19434.2"/>
    <property type="molecule type" value="Genomic_DNA"/>
</dbReference>
<dbReference type="EMBL" id="BX284605">
    <property type="protein sequence ID" value="CBW48438.1"/>
    <property type="molecule type" value="Genomic_DNA"/>
</dbReference>
<dbReference type="RefSeq" id="NP_001256688.1">
    <molecule id="G5EGQ2-1"/>
    <property type="nucleotide sequence ID" value="NM_001269759.2"/>
</dbReference>
<dbReference type="RefSeq" id="NP_001256689.1">
    <molecule id="G5EGQ2-2"/>
    <property type="nucleotide sequence ID" value="NM_001269760.3"/>
</dbReference>
<dbReference type="FunCoup" id="G5EGQ2">
    <property type="interactions" value="51"/>
</dbReference>
<dbReference type="IntAct" id="G5EGQ2">
    <property type="interactions" value="1"/>
</dbReference>
<dbReference type="STRING" id="6239.T05G11.1a.1"/>
<dbReference type="PaxDb" id="6239-T05G11.1a"/>
<dbReference type="EnsemblMetazoa" id="T05G11.1a.1">
    <molecule id="G5EGQ2-1"/>
    <property type="protein sequence ID" value="T05G11.1a.1"/>
    <property type="gene ID" value="WBGene00011505"/>
</dbReference>
<dbReference type="EnsemblMetazoa" id="T05G11.1b.1">
    <molecule id="G5EGQ2-2"/>
    <property type="protein sequence ID" value="T05G11.1b.1"/>
    <property type="gene ID" value="WBGene00011505"/>
</dbReference>
<dbReference type="GeneID" id="188142"/>
<dbReference type="KEGG" id="cel:CELE_T05G11.1"/>
<dbReference type="AGR" id="WB:WBGene00011505"/>
<dbReference type="CTD" id="188142"/>
<dbReference type="WormBase" id="T05G11.1a">
    <molecule id="G5EGQ2-1"/>
    <property type="protein sequence ID" value="CE42296"/>
    <property type="gene ID" value="WBGene00011505"/>
    <property type="gene designation" value="pzf-1"/>
</dbReference>
<dbReference type="WormBase" id="T05G11.1b">
    <molecule id="G5EGQ2-2"/>
    <property type="protein sequence ID" value="CE45365"/>
    <property type="gene ID" value="WBGene00011505"/>
    <property type="gene designation" value="pzf-1"/>
</dbReference>
<dbReference type="eggNOG" id="KOG1721">
    <property type="taxonomic scope" value="Eukaryota"/>
</dbReference>
<dbReference type="HOGENOM" id="CLU_541043_0_0_1"/>
<dbReference type="InParanoid" id="G5EGQ2"/>
<dbReference type="OMA" id="HEREHTM"/>
<dbReference type="OrthoDB" id="6155966at2759"/>
<dbReference type="PhylomeDB" id="G5EGQ2"/>
<dbReference type="PRO" id="PR:G5EGQ2"/>
<dbReference type="Proteomes" id="UP000001940">
    <property type="component" value="Chromosome V"/>
</dbReference>
<dbReference type="Bgee" id="WBGene00011505">
    <property type="expression patterns" value="Expressed in germ line (C elegans) and 3 other cell types or tissues"/>
</dbReference>
<dbReference type="ExpressionAtlas" id="G5EGQ2">
    <property type="expression patterns" value="baseline and differential"/>
</dbReference>
<dbReference type="GO" id="GO:0005634">
    <property type="term" value="C:nucleus"/>
    <property type="evidence" value="ECO:0000318"/>
    <property type="project" value="GO_Central"/>
</dbReference>
<dbReference type="GO" id="GO:0000981">
    <property type="term" value="F:DNA-binding transcription factor activity, RNA polymerase II-specific"/>
    <property type="evidence" value="ECO:0000318"/>
    <property type="project" value="GO_Central"/>
</dbReference>
<dbReference type="GO" id="GO:0043565">
    <property type="term" value="F:sequence-specific DNA binding"/>
    <property type="evidence" value="ECO:0000318"/>
    <property type="project" value="GO_Central"/>
</dbReference>
<dbReference type="GO" id="GO:0008270">
    <property type="term" value="F:zinc ion binding"/>
    <property type="evidence" value="ECO:0007669"/>
    <property type="project" value="UniProtKB-KW"/>
</dbReference>
<dbReference type="GO" id="GO:0045132">
    <property type="term" value="P:meiotic chromosome segregation"/>
    <property type="evidence" value="ECO:0000316"/>
    <property type="project" value="WormBase"/>
</dbReference>
<dbReference type="GO" id="GO:0051446">
    <property type="term" value="P:positive regulation of meiotic cell cycle"/>
    <property type="evidence" value="ECO:0000316"/>
    <property type="project" value="WormBase"/>
</dbReference>
<dbReference type="GO" id="GO:0006357">
    <property type="term" value="P:regulation of transcription by RNA polymerase II"/>
    <property type="evidence" value="ECO:0000318"/>
    <property type="project" value="GO_Central"/>
</dbReference>
<dbReference type="Gene3D" id="3.30.160.60">
    <property type="entry name" value="Classic Zinc Finger"/>
    <property type="match status" value="2"/>
</dbReference>
<dbReference type="InterPro" id="IPR013087">
    <property type="entry name" value="Znf_C2H2_type"/>
</dbReference>
<dbReference type="InterPro" id="IPR001781">
    <property type="entry name" value="Znf_LIM"/>
</dbReference>
<dbReference type="PANTHER" id="PTHR24409">
    <property type="entry name" value="ZINC FINGER PROTEIN 142"/>
    <property type="match status" value="1"/>
</dbReference>
<dbReference type="SMART" id="SM00355">
    <property type="entry name" value="ZnF_C2H2"/>
    <property type="match status" value="8"/>
</dbReference>
<dbReference type="PROSITE" id="PS00478">
    <property type="entry name" value="LIM_DOMAIN_1"/>
    <property type="match status" value="1"/>
</dbReference>
<dbReference type="PROSITE" id="PS00028">
    <property type="entry name" value="ZINC_FINGER_C2H2_1"/>
    <property type="match status" value="6"/>
</dbReference>
<dbReference type="PROSITE" id="PS50157">
    <property type="entry name" value="ZINC_FINGER_C2H2_2"/>
    <property type="match status" value="3"/>
</dbReference>
<gene>
    <name evidence="8" type="primary">pzf-1</name>
    <name evidence="8" type="ORF">T05G11.1</name>
</gene>
<comment type="function">
    <text evidence="3 6">Possible transcriptional regulator (Probable). Involved in promoting segregation of chromosomes during meiosis, perhaps acting downstream of the let-60 RAS / mpk-1 MAPK signaling pathway (PubMed:17096596).</text>
</comment>
<comment type="alternative products">
    <event type="alternative splicing"/>
    <isoform>
        <id>G5EGQ2-1</id>
        <name evidence="8">a</name>
        <sequence type="displayed"/>
    </isoform>
    <isoform>
        <id>G5EGQ2-2</id>
        <name evidence="9">b</name>
        <sequence type="described" ref="VSP_061536"/>
    </isoform>
</comment>
<comment type="tissue specificity">
    <text evidence="3">Expressed in proximal gonad.</text>
</comment>
<comment type="disruption phenotype">
    <text evidence="3">Superficially wild-type, with a normal brood size, but drastic reduction in brood size when grown at a permissive temperature of 20 degrees Celsius in an mpk-1 mutant background. Double mutant mpk-1;pzf-1 shows meiotic chromosome non-disjunction, increased embryonic lethality and also an abnormal male:hermaphrodite ratio, at 23 degrees Celsius.</text>
</comment>